<accession>Q9LDH1</accession>
<name>SIB1_ARATH</name>
<gene>
    <name type="primary">SIB1</name>
    <name evidence="6" type="synonym">VQ23</name>
    <name type="ordered locus">At3g56710</name>
    <name type="ORF">T8M16.40</name>
</gene>
<organism>
    <name type="scientific">Arabidopsis thaliana</name>
    <name type="common">Mouse-ear cress</name>
    <dbReference type="NCBI Taxonomy" id="3702"/>
    <lineage>
        <taxon>Eukaryota</taxon>
        <taxon>Viridiplantae</taxon>
        <taxon>Streptophyta</taxon>
        <taxon>Embryophyta</taxon>
        <taxon>Tracheophyta</taxon>
        <taxon>Spermatophyta</taxon>
        <taxon>Magnoliopsida</taxon>
        <taxon>eudicotyledons</taxon>
        <taxon>Gunneridae</taxon>
        <taxon>Pentapetalae</taxon>
        <taxon>rosids</taxon>
        <taxon>malvids</taxon>
        <taxon>Brassicales</taxon>
        <taxon>Brassicaceae</taxon>
        <taxon>Camelineae</taxon>
        <taxon>Arabidopsis</taxon>
    </lineage>
</organism>
<dbReference type="EMBL" id="AF224762">
    <property type="protein sequence ID" value="AAF34713.1"/>
    <property type="molecule type" value="mRNA"/>
</dbReference>
<dbReference type="EMBL" id="AL390921">
    <property type="protein sequence ID" value="CAC00734.1"/>
    <property type="molecule type" value="Genomic_DNA"/>
</dbReference>
<dbReference type="EMBL" id="CP002686">
    <property type="protein sequence ID" value="AEE79554.1"/>
    <property type="molecule type" value="Genomic_DNA"/>
</dbReference>
<dbReference type="EMBL" id="CP002686">
    <property type="protein sequence ID" value="ANM63329.1"/>
    <property type="molecule type" value="Genomic_DNA"/>
</dbReference>
<dbReference type="EMBL" id="AY042831">
    <property type="protein sequence ID" value="AAK68771.1"/>
    <property type="molecule type" value="mRNA"/>
</dbReference>
<dbReference type="EMBL" id="BT002607">
    <property type="protein sequence ID" value="AAO00967.1"/>
    <property type="molecule type" value="mRNA"/>
</dbReference>
<dbReference type="PIR" id="T51259">
    <property type="entry name" value="T51259"/>
</dbReference>
<dbReference type="RefSeq" id="NP_001325423.1">
    <property type="nucleotide sequence ID" value="NM_001339806.1"/>
</dbReference>
<dbReference type="RefSeq" id="NP_191230.1">
    <property type="nucleotide sequence ID" value="NM_115530.2"/>
</dbReference>
<dbReference type="PDB" id="8K31">
    <property type="method" value="NMR"/>
    <property type="chains" value="A=11-100"/>
</dbReference>
<dbReference type="PDBsum" id="8K31"/>
<dbReference type="SMR" id="Q9LDH1"/>
<dbReference type="BioGRID" id="10154">
    <property type="interactions" value="2"/>
</dbReference>
<dbReference type="FunCoup" id="Q9LDH1">
    <property type="interactions" value="60"/>
</dbReference>
<dbReference type="IntAct" id="Q9LDH1">
    <property type="interactions" value="2"/>
</dbReference>
<dbReference type="STRING" id="3702.Q9LDH1"/>
<dbReference type="PaxDb" id="3702-AT3G56710.1"/>
<dbReference type="ProteomicsDB" id="234521"/>
<dbReference type="EnsemblPlants" id="AT3G56710.1">
    <property type="protein sequence ID" value="AT3G56710.1"/>
    <property type="gene ID" value="AT3G56710"/>
</dbReference>
<dbReference type="EnsemblPlants" id="AT3G56710.2">
    <property type="protein sequence ID" value="AT3G56710.2"/>
    <property type="gene ID" value="AT3G56710"/>
</dbReference>
<dbReference type="GeneID" id="824838"/>
<dbReference type="Gramene" id="AT3G56710.1">
    <property type="protein sequence ID" value="AT3G56710.1"/>
    <property type="gene ID" value="AT3G56710"/>
</dbReference>
<dbReference type="Gramene" id="AT3G56710.2">
    <property type="protein sequence ID" value="AT3G56710.2"/>
    <property type="gene ID" value="AT3G56710"/>
</dbReference>
<dbReference type="KEGG" id="ath:AT3G56710"/>
<dbReference type="Araport" id="AT3G56710"/>
<dbReference type="TAIR" id="AT3G56710">
    <property type="gene designation" value="SIB1"/>
</dbReference>
<dbReference type="eggNOG" id="ENOG502S9W6">
    <property type="taxonomic scope" value="Eukaryota"/>
</dbReference>
<dbReference type="HOGENOM" id="CLU_1733985_0_0_1"/>
<dbReference type="InParanoid" id="Q9LDH1"/>
<dbReference type="OMA" id="CEYFEPL"/>
<dbReference type="PhylomeDB" id="Q9LDH1"/>
<dbReference type="PRO" id="PR:Q9LDH1"/>
<dbReference type="Proteomes" id="UP000006548">
    <property type="component" value="Chromosome 3"/>
</dbReference>
<dbReference type="ExpressionAtlas" id="Q9LDH1">
    <property type="expression patterns" value="baseline and differential"/>
</dbReference>
<dbReference type="GO" id="GO:0009507">
    <property type="term" value="C:chloroplast"/>
    <property type="evidence" value="ECO:0000314"/>
    <property type="project" value="TAIR"/>
</dbReference>
<dbReference type="GO" id="GO:0005634">
    <property type="term" value="C:nucleus"/>
    <property type="evidence" value="ECO:0000314"/>
    <property type="project" value="UniProtKB"/>
</dbReference>
<dbReference type="GO" id="GO:0071482">
    <property type="term" value="P:cellular response to light stimulus"/>
    <property type="evidence" value="ECO:0000270"/>
    <property type="project" value="UniProtKB"/>
</dbReference>
<dbReference type="GO" id="GO:0042742">
    <property type="term" value="P:defense response to bacterium"/>
    <property type="evidence" value="ECO:0000315"/>
    <property type="project" value="UniProtKB"/>
</dbReference>
<dbReference type="GO" id="GO:0051091">
    <property type="term" value="P:positive regulation of DNA-binding transcription factor activity"/>
    <property type="evidence" value="ECO:0000314"/>
    <property type="project" value="UniProtKB"/>
</dbReference>
<dbReference type="InterPro" id="IPR039335">
    <property type="entry name" value="SIB1/2"/>
</dbReference>
<dbReference type="InterPro" id="IPR008889">
    <property type="entry name" value="VQ"/>
</dbReference>
<dbReference type="PANTHER" id="PTHR33624">
    <property type="entry name" value="SIGMA FACTOR BINDING PROTEIN 1, CHLOROPLASTIC"/>
    <property type="match status" value="1"/>
</dbReference>
<dbReference type="PANTHER" id="PTHR33624:SF2">
    <property type="entry name" value="SIGMA FACTOR BINDING PROTEIN 1, CHLOROPLASTIC"/>
    <property type="match status" value="1"/>
</dbReference>
<dbReference type="Pfam" id="PF05678">
    <property type="entry name" value="VQ"/>
    <property type="match status" value="1"/>
</dbReference>
<reference key="1">
    <citation type="journal article" date="2002" name="FEBS Lett.">
        <title>Novel nuclear-encoded proteins interacting with a plastid sigma factor, Sig1, in Arabidopsis thaliana.</title>
        <authorList>
            <person name="Morikawa K."/>
            <person name="Shiina T."/>
            <person name="Murakami S."/>
            <person name="Toyoshima Y."/>
        </authorList>
    </citation>
    <scope>NUCLEOTIDE SEQUENCE [MRNA]</scope>
    <scope>INTERACTION WITH SIGA</scope>
    <scope>SUBCELLULAR LOCATION</scope>
    <scope>TISSUE SPECIFICITY</scope>
    <scope>INDUCTION BY LIGHT</scope>
</reference>
<reference key="2">
    <citation type="journal article" date="2000" name="Nature">
        <title>Sequence and analysis of chromosome 3 of the plant Arabidopsis thaliana.</title>
        <authorList>
            <person name="Salanoubat M."/>
            <person name="Lemcke K."/>
            <person name="Rieger M."/>
            <person name="Ansorge W."/>
            <person name="Unseld M."/>
            <person name="Fartmann B."/>
            <person name="Valle G."/>
            <person name="Bloecker H."/>
            <person name="Perez-Alonso M."/>
            <person name="Obermaier B."/>
            <person name="Delseny M."/>
            <person name="Boutry M."/>
            <person name="Grivell L.A."/>
            <person name="Mache R."/>
            <person name="Puigdomenech P."/>
            <person name="De Simone V."/>
            <person name="Choisne N."/>
            <person name="Artiguenave F."/>
            <person name="Robert C."/>
            <person name="Brottier P."/>
            <person name="Wincker P."/>
            <person name="Cattolico L."/>
            <person name="Weissenbach J."/>
            <person name="Saurin W."/>
            <person name="Quetier F."/>
            <person name="Schaefer M."/>
            <person name="Mueller-Auer S."/>
            <person name="Gabel C."/>
            <person name="Fuchs M."/>
            <person name="Benes V."/>
            <person name="Wurmbach E."/>
            <person name="Drzonek H."/>
            <person name="Erfle H."/>
            <person name="Jordan N."/>
            <person name="Bangert S."/>
            <person name="Wiedelmann R."/>
            <person name="Kranz H."/>
            <person name="Voss H."/>
            <person name="Holland R."/>
            <person name="Brandt P."/>
            <person name="Nyakatura G."/>
            <person name="Vezzi A."/>
            <person name="D'Angelo M."/>
            <person name="Pallavicini A."/>
            <person name="Toppo S."/>
            <person name="Simionati B."/>
            <person name="Conrad A."/>
            <person name="Hornischer K."/>
            <person name="Kauer G."/>
            <person name="Loehnert T.-H."/>
            <person name="Nordsiek G."/>
            <person name="Reichelt J."/>
            <person name="Scharfe M."/>
            <person name="Schoen O."/>
            <person name="Bargues M."/>
            <person name="Terol J."/>
            <person name="Climent J."/>
            <person name="Navarro P."/>
            <person name="Collado C."/>
            <person name="Perez-Perez A."/>
            <person name="Ottenwaelder B."/>
            <person name="Duchemin D."/>
            <person name="Cooke R."/>
            <person name="Laudie M."/>
            <person name="Berger-Llauro C."/>
            <person name="Purnelle B."/>
            <person name="Masuy D."/>
            <person name="de Haan M."/>
            <person name="Maarse A.C."/>
            <person name="Alcaraz J.-P."/>
            <person name="Cottet A."/>
            <person name="Casacuberta E."/>
            <person name="Monfort A."/>
            <person name="Argiriou A."/>
            <person name="Flores M."/>
            <person name="Liguori R."/>
            <person name="Vitale D."/>
            <person name="Mannhaupt G."/>
            <person name="Haase D."/>
            <person name="Schoof H."/>
            <person name="Rudd S."/>
            <person name="Zaccaria P."/>
            <person name="Mewes H.-W."/>
            <person name="Mayer K.F.X."/>
            <person name="Kaul S."/>
            <person name="Town C.D."/>
            <person name="Koo H.L."/>
            <person name="Tallon L.J."/>
            <person name="Jenkins J."/>
            <person name="Rooney T."/>
            <person name="Rizzo M."/>
            <person name="Walts A."/>
            <person name="Utterback T."/>
            <person name="Fujii C.Y."/>
            <person name="Shea T.P."/>
            <person name="Creasy T.H."/>
            <person name="Haas B."/>
            <person name="Maiti R."/>
            <person name="Wu D."/>
            <person name="Peterson J."/>
            <person name="Van Aken S."/>
            <person name="Pai G."/>
            <person name="Militscher J."/>
            <person name="Sellers P."/>
            <person name="Gill J.E."/>
            <person name="Feldblyum T.V."/>
            <person name="Preuss D."/>
            <person name="Lin X."/>
            <person name="Nierman W.C."/>
            <person name="Salzberg S.L."/>
            <person name="White O."/>
            <person name="Venter J.C."/>
            <person name="Fraser C.M."/>
            <person name="Kaneko T."/>
            <person name="Nakamura Y."/>
            <person name="Sato S."/>
            <person name="Kato T."/>
            <person name="Asamizu E."/>
            <person name="Sasamoto S."/>
            <person name="Kimura T."/>
            <person name="Idesawa K."/>
            <person name="Kawashima K."/>
            <person name="Kishida Y."/>
            <person name="Kiyokawa C."/>
            <person name="Kohara M."/>
            <person name="Matsumoto M."/>
            <person name="Matsuno A."/>
            <person name="Muraki A."/>
            <person name="Nakayama S."/>
            <person name="Nakazaki N."/>
            <person name="Shinpo S."/>
            <person name="Takeuchi C."/>
            <person name="Wada T."/>
            <person name="Watanabe A."/>
            <person name="Yamada M."/>
            <person name="Yasuda M."/>
            <person name="Tabata S."/>
        </authorList>
    </citation>
    <scope>NUCLEOTIDE SEQUENCE [LARGE SCALE GENOMIC DNA]</scope>
    <source>
        <strain>cv. Columbia</strain>
    </source>
</reference>
<reference key="3">
    <citation type="journal article" date="2017" name="Plant J.">
        <title>Araport11: a complete reannotation of the Arabidopsis thaliana reference genome.</title>
        <authorList>
            <person name="Cheng C.Y."/>
            <person name="Krishnakumar V."/>
            <person name="Chan A.P."/>
            <person name="Thibaud-Nissen F."/>
            <person name="Schobel S."/>
            <person name="Town C.D."/>
        </authorList>
    </citation>
    <scope>GENOME REANNOTATION</scope>
    <source>
        <strain>cv. Columbia</strain>
    </source>
</reference>
<reference key="4">
    <citation type="journal article" date="2003" name="Science">
        <title>Empirical analysis of transcriptional activity in the Arabidopsis genome.</title>
        <authorList>
            <person name="Yamada K."/>
            <person name="Lim J."/>
            <person name="Dale J.M."/>
            <person name="Chen H."/>
            <person name="Shinn P."/>
            <person name="Palm C.J."/>
            <person name="Southwick A.M."/>
            <person name="Wu H.C."/>
            <person name="Kim C.J."/>
            <person name="Nguyen M."/>
            <person name="Pham P.K."/>
            <person name="Cheuk R.F."/>
            <person name="Karlin-Newmann G."/>
            <person name="Liu S.X."/>
            <person name="Lam B."/>
            <person name="Sakano H."/>
            <person name="Wu T."/>
            <person name="Yu G."/>
            <person name="Miranda M."/>
            <person name="Quach H.L."/>
            <person name="Tripp M."/>
            <person name="Chang C.H."/>
            <person name="Lee J.M."/>
            <person name="Toriumi M.J."/>
            <person name="Chan M.M."/>
            <person name="Tang C.C."/>
            <person name="Onodera C.S."/>
            <person name="Deng J.M."/>
            <person name="Akiyama K."/>
            <person name="Ansari Y."/>
            <person name="Arakawa T."/>
            <person name="Banh J."/>
            <person name="Banno F."/>
            <person name="Bowser L."/>
            <person name="Brooks S.Y."/>
            <person name="Carninci P."/>
            <person name="Chao Q."/>
            <person name="Choy N."/>
            <person name="Enju A."/>
            <person name="Goldsmith A.D."/>
            <person name="Gurjal M."/>
            <person name="Hansen N.F."/>
            <person name="Hayashizaki Y."/>
            <person name="Johnson-Hopson C."/>
            <person name="Hsuan V.W."/>
            <person name="Iida K."/>
            <person name="Karnes M."/>
            <person name="Khan S."/>
            <person name="Koesema E."/>
            <person name="Ishida J."/>
            <person name="Jiang P.X."/>
            <person name="Jones T."/>
            <person name="Kawai J."/>
            <person name="Kamiya A."/>
            <person name="Meyers C."/>
            <person name="Nakajima M."/>
            <person name="Narusaka M."/>
            <person name="Seki M."/>
            <person name="Sakurai T."/>
            <person name="Satou M."/>
            <person name="Tamse R."/>
            <person name="Vaysberg M."/>
            <person name="Wallender E.K."/>
            <person name="Wong C."/>
            <person name="Yamamura Y."/>
            <person name="Yuan S."/>
            <person name="Shinozaki K."/>
            <person name="Davis R.W."/>
            <person name="Theologis A."/>
            <person name="Ecker J.R."/>
        </authorList>
    </citation>
    <scope>NUCLEOTIDE SEQUENCE [LARGE SCALE MRNA]</scope>
    <source>
        <strain>cv. Columbia</strain>
    </source>
</reference>
<reference key="5">
    <citation type="journal article" date="2010" name="Plant Cell Environ.">
        <title>The Arabidopsis gene SIGMA FACTOR-BINDING PROTEIN 1 plays a role in the salicylate- and jasmonate-mediated defence responses.</title>
        <authorList>
            <person name="Xie Y.-D."/>
            <person name="Li W."/>
            <person name="Guo D."/>
            <person name="Dong J."/>
            <person name="Zhang Q."/>
            <person name="Fu Y."/>
            <person name="Ren D."/>
            <person name="Peng M."/>
            <person name="Xia Y."/>
        </authorList>
    </citation>
    <scope>FUNCTION</scope>
    <scope>DISRUPTION PHENOTYPE</scope>
    <scope>INDUCTION BY PSEUDOMONAS SYRINGAE</scope>
    <source>
        <strain>cv. Columbia</strain>
    </source>
</reference>
<reference key="6">
    <citation type="journal article" date="2011" name="Plant Cell">
        <title>Arabidopsis sigma factor binding proteins are activators of the WRKY33 transcription factor in plant defense.</title>
        <authorList>
            <person name="Lai Z."/>
            <person name="Li Y."/>
            <person name="Wang F."/>
            <person name="Cheng Y."/>
            <person name="Fan B."/>
            <person name="Yu J.Q."/>
            <person name="Chen Z."/>
        </authorList>
    </citation>
    <scope>FUNCTION</scope>
    <scope>INTERACTION WITH WRKY25 AND WRKY33</scope>
    <scope>SUBCELLULAR LOCATION</scope>
    <scope>INDUCTION</scope>
    <scope>MUTAGENESIS OF 62-VAL-GLN-63</scope>
    <scope>DISRUPTION PHENOTYPE</scope>
</reference>
<reference key="7">
    <citation type="journal article" date="2012" name="Plant Physiol.">
        <title>Structural and functional analysis of VQ motif-containing proteins in Arabidopsis as interacting proteins of WRKY transcription factors.</title>
        <authorList>
            <person name="Cheng Y."/>
            <person name="Zhou Y."/>
            <person name="Yang Y."/>
            <person name="Chi Y.J."/>
            <person name="Zhou J."/>
            <person name="Chen J.Y."/>
            <person name="Wang F."/>
            <person name="Fan B."/>
            <person name="Shi K."/>
            <person name="Zhou Y.H."/>
            <person name="Yu J.Q."/>
            <person name="Chen Z."/>
        </authorList>
    </citation>
    <scope>GENE FAMILY</scope>
    <scope>NOMENCLATURE</scope>
</reference>
<keyword id="KW-0002">3D-structure</keyword>
<keyword id="KW-0150">Chloroplast</keyword>
<keyword id="KW-0539">Nucleus</keyword>
<keyword id="KW-0611">Plant defense</keyword>
<keyword id="KW-0934">Plastid</keyword>
<keyword id="KW-1185">Reference proteome</keyword>
<keyword id="KW-0809">Transit peptide</keyword>
<evidence type="ECO:0000255" key="1"/>
<evidence type="ECO:0000256" key="2">
    <source>
        <dbReference type="SAM" id="MobiDB-lite"/>
    </source>
</evidence>
<evidence type="ECO:0000269" key="3">
    <source>
    </source>
</evidence>
<evidence type="ECO:0000269" key="4">
    <source>
    </source>
</evidence>
<evidence type="ECO:0000269" key="5">
    <source>
    </source>
</evidence>
<evidence type="ECO:0000303" key="6">
    <source>
    </source>
</evidence>
<evidence type="ECO:0000305" key="7"/>
<evidence type="ECO:0000305" key="8">
    <source>
    </source>
</evidence>
<proteinExistence type="evidence at protein level"/>
<protein>
    <recommendedName>
        <fullName>Sigma factor binding protein 1, chloroplastic</fullName>
        <shortName>AtsibI</shortName>
        <shortName>Sigma factor binding protein I</shortName>
    </recommendedName>
    <alternativeName>
        <fullName>SigA binding protein</fullName>
    </alternativeName>
    <alternativeName>
        <fullName evidence="6">VQ motif-containing protein 23</fullName>
        <shortName evidence="6">AtVQ23</shortName>
    </alternativeName>
</protein>
<feature type="transit peptide" description="Chloroplast" evidence="1">
    <location>
        <begin position="1"/>
        <end position="54"/>
    </location>
</feature>
<feature type="chain" id="PRO_0000418098" description="Sigma factor binding protein 1, chloroplastic">
    <location>
        <begin position="55"/>
        <end position="151"/>
    </location>
</feature>
<feature type="region of interest" description="Disordered" evidence="2">
    <location>
        <begin position="1"/>
        <end position="41"/>
    </location>
</feature>
<feature type="region of interest" description="Disordered" evidence="2">
    <location>
        <begin position="66"/>
        <end position="93"/>
    </location>
</feature>
<feature type="short sequence motif" description="Bipartite nuclear localization signal" evidence="8">
    <location>
        <begin position="16"/>
        <end position="32"/>
    </location>
</feature>
<feature type="short sequence motif" description="VQ" evidence="7">
    <location>
        <begin position="58"/>
        <end position="67"/>
    </location>
</feature>
<feature type="compositionally biased region" description="Low complexity" evidence="2">
    <location>
        <begin position="1"/>
        <end position="13"/>
    </location>
</feature>
<feature type="mutagenesis site" description="Loss of interaction with WRKY33 protein." evidence="5">
    <original>VQ</original>
    <variation>AA</variation>
    <location>
        <begin position="62"/>
        <end position="63"/>
    </location>
</feature>
<sequence>MESSSSTFLTTTSLDKKKPSPVSRKSPKQKKKTTSTNKPIKVRYISNPMRVQTCASKFRELVQELTGQDAVDLQPEPIYSPSSDDHNLSPPAENLAPRVLHQEPFGERDSDCYEPLNAEDMFLPDQMSAGFSGFFSNGFYNVNDFGSIDSM</sequence>
<comment type="function">
    <text evidence="4 5">Contributes to plant defense. May regulate chloroplast metabolism upon infection with pathogens such as Pseudomonas syringae (PubMed:20040062). Functions as activator of WRKY33 in plant defense against necrotrophic pathogens by stimulating the DNA-binding activity of WRKY33 (PubMed:21990940).</text>
</comment>
<comment type="subunit">
    <text evidence="3 5">Interacts with the sigma factor SIGA in chloroplast (PubMed:11943170). Interacts with WRKY25 and WRKY33 in the nucleus (PubMed:21990940).</text>
</comment>
<comment type="interaction">
    <interactant intactId="EBI-2118209">
        <id>Q9LDH1</id>
    </interactant>
    <interactant intactId="EBI-2118157">
        <id>O24629</id>
        <label>SIGA</label>
    </interactant>
    <organismsDiffer>false</organismsDiffer>
    <experiments>3</experiments>
</comment>
<comment type="subcellular location">
    <subcellularLocation>
        <location evidence="3">Plastid</location>
        <location evidence="3">Chloroplast</location>
    </subcellularLocation>
    <subcellularLocation>
        <location evidence="5">Nucleus</location>
    </subcellularLocation>
    <text evidence="7">Can localize to both chloroplast and nucleus.</text>
</comment>
<comment type="tissue specificity">
    <text evidence="3">Expressed in leaves and roots, but not in flowers.</text>
</comment>
<comment type="induction">
    <text evidence="3 4 5">By light (PubMed:11943170). Accumulates in response to infection with the bacterial pathogen Pseudomonas syringae (PubMed:20040062). Induced by infection with the necrotrophic fungal pathogen B.cinerea (PubMed:21990940).</text>
</comment>
<comment type="disruption phenotype">
    <text evidence="4 5">No visible phenotype under normal growth conditions, but mutant plants show impaired induction of some defense-related genes triggered by pathogen infection and treatments with salicylic acid (SA) and jasmonic acid (JA) (PubMed:20040062). Increased susceptibility to the necrotrophic fungal pathogen B.cinerea (PubMed:21990940).</text>
</comment>